<name>PAFA_CAVPO</name>
<gene>
    <name type="primary">PLA2G7</name>
    <name type="synonym">PAFAH</name>
</gene>
<reference key="1">
    <citation type="journal article" date="1996" name="J. Biochem.">
        <title>Cloning, expression and characterization of plasma platelet-activating factor-acetylhydrolase from guinea pig.</title>
        <authorList>
            <person name="Karasawa K."/>
            <person name="Kuge O."/>
            <person name="Kawasaki K."/>
            <person name="Nishijima M."/>
            <person name="Nakano Y."/>
            <person name="Tomita M."/>
            <person name="Yokoyama K."/>
            <person name="Setaka M."/>
            <person name="Nojima S."/>
        </authorList>
    </citation>
    <scope>NUCLEOTIDE SEQUENCE [MRNA]</scope>
    <source>
        <strain>Hartley</strain>
        <tissue>Liver</tissue>
    </source>
</reference>
<evidence type="ECO:0000250" key="1"/>
<evidence type="ECO:0000250" key="2">
    <source>
        <dbReference type="UniProtKB" id="Q13093"/>
    </source>
</evidence>
<evidence type="ECO:0000250" key="3">
    <source>
        <dbReference type="UniProtKB" id="Q60963"/>
    </source>
</evidence>
<evidence type="ECO:0000255" key="4"/>
<evidence type="ECO:0000255" key="5">
    <source>
        <dbReference type="PROSITE-ProRule" id="PRU10037"/>
    </source>
</evidence>
<evidence type="ECO:0000305" key="6"/>
<proteinExistence type="evidence at transcript level"/>
<organism>
    <name type="scientific">Cavia porcellus</name>
    <name type="common">Guinea pig</name>
    <dbReference type="NCBI Taxonomy" id="10141"/>
    <lineage>
        <taxon>Eukaryota</taxon>
        <taxon>Metazoa</taxon>
        <taxon>Chordata</taxon>
        <taxon>Craniata</taxon>
        <taxon>Vertebrata</taxon>
        <taxon>Euteleostomi</taxon>
        <taxon>Mammalia</taxon>
        <taxon>Eutheria</taxon>
        <taxon>Euarchontoglires</taxon>
        <taxon>Glires</taxon>
        <taxon>Rodentia</taxon>
        <taxon>Hystricomorpha</taxon>
        <taxon>Caviidae</taxon>
        <taxon>Cavia</taxon>
    </lineage>
</organism>
<protein>
    <recommendedName>
        <fullName>Platelet-activating factor acetylhydrolase</fullName>
        <shortName>PAF acetylhydrolase</shortName>
        <ecNumber evidence="2">3.1.1.47</ecNumber>
    </recommendedName>
    <alternativeName>
        <fullName>1-alkyl-2-acetylglycerophosphocholine esterase</fullName>
    </alternativeName>
    <alternativeName>
        <fullName>2-acetyl-1-alkylglycerophosphocholine esterase</fullName>
    </alternativeName>
    <alternativeName>
        <fullName>LDL-associated phospholipase A2</fullName>
        <shortName>LDL-PLA(2)</shortName>
    </alternativeName>
    <alternativeName>
        <fullName>PAF 2-acylhydrolase</fullName>
    </alternativeName>
</protein>
<comment type="function">
    <text evidence="2">Lipoprotein-associated calcium-independent phospholipase A2 involved in phospholipid catabolism during inflammatory and oxidative stress response (By similarity). At the lipid-aqueous interface, hydrolyzes the ester bond of fatty acyl group attached at sn-2 position of phospholipids (phospholipase A2 activity) (By similarity). Specifically targets phospholipids with a short-chain fatty acyl group at sn-2 position. Can hydrolyze phospholipids with long fatty acyl chains, only if they carry oxidized functional groups (By similarity). Hydrolyzes and inactivates platelet-activating factor (PAF, 1-O-alkyl-2-acetyl-sn-glycero-3-phosphocholine), a potent pro-inflammatory signaling lipid that acts through PTAFR on various innate immune cells (By similarity). Hydrolyzes oxidatively truncated phospholipids carrying an aldehyde group at omega position, preventing their accumulation in lipoprotein particles and uncontrolled pro-inflammatory effects (By similarity). As part of high-density lipoprotein (HDL) particles, can hydrolyze phospholipids having long-chain fatty acyl hydroperoxides at sn-2 position and protect against potential accumulation of these oxylipins in the vascular wall (By similarity). Catalyzes the release from membrane phospholipids of F2-isoprostanes, lipid biomarkers of cellular oxidative damage (By similarity).</text>
</comment>
<comment type="catalytic activity">
    <reaction evidence="2">
        <text>a 1-O-alkyl-2-acetyl-sn-glycero-3-phosphocholine + H2O = a 1-O-alkyl-sn-glycero-3-phosphocholine + acetate + H(+)</text>
        <dbReference type="Rhea" id="RHEA:17777"/>
        <dbReference type="ChEBI" id="CHEBI:15377"/>
        <dbReference type="ChEBI" id="CHEBI:15378"/>
        <dbReference type="ChEBI" id="CHEBI:30089"/>
        <dbReference type="ChEBI" id="CHEBI:30909"/>
        <dbReference type="ChEBI" id="CHEBI:36707"/>
        <dbReference type="EC" id="3.1.1.47"/>
    </reaction>
    <physiologicalReaction direction="left-to-right" evidence="2">
        <dbReference type="Rhea" id="RHEA:17778"/>
    </physiologicalReaction>
</comment>
<comment type="catalytic activity">
    <reaction evidence="2">
        <text>1-O-decyl-2-acetyl-sn-glycero-3-phosphocholine + H2O = 1-O-decyl-sn-glycero-3-phosphocholine + acetate + H(+)</text>
        <dbReference type="Rhea" id="RHEA:41376"/>
        <dbReference type="ChEBI" id="CHEBI:15377"/>
        <dbReference type="ChEBI" id="CHEBI:15378"/>
        <dbReference type="ChEBI" id="CHEBI:30089"/>
        <dbReference type="ChEBI" id="CHEBI:78108"/>
        <dbReference type="ChEBI" id="CHEBI:78109"/>
    </reaction>
    <physiologicalReaction direction="left-to-right" evidence="2">
        <dbReference type="Rhea" id="RHEA:41377"/>
    </physiologicalReaction>
</comment>
<comment type="catalytic activity">
    <reaction evidence="2">
        <text>1-O-dodecyl-2-acetyl-sn-glycero-3-phosphocholine + H2O = 1-O-dodecyl-sn-glycero-3-phosphocholine + acetate + H(+)</text>
        <dbReference type="Rhea" id="RHEA:41372"/>
        <dbReference type="ChEBI" id="CHEBI:15377"/>
        <dbReference type="ChEBI" id="CHEBI:15378"/>
        <dbReference type="ChEBI" id="CHEBI:30089"/>
        <dbReference type="ChEBI" id="CHEBI:78103"/>
        <dbReference type="ChEBI" id="CHEBI:78104"/>
    </reaction>
    <physiologicalReaction direction="left-to-right" evidence="2">
        <dbReference type="Rhea" id="RHEA:41373"/>
    </physiologicalReaction>
</comment>
<comment type="catalytic activity">
    <reaction evidence="2">
        <text>1-O-tetradecyl-2-acetyl-sn-glycero-3-phosphocholine + H2O = 1-O-tetradecyl-sn-glycero-3-phosphocholine + acetate + H(+)</text>
        <dbReference type="Rhea" id="RHEA:41368"/>
        <dbReference type="ChEBI" id="CHEBI:15377"/>
        <dbReference type="ChEBI" id="CHEBI:15378"/>
        <dbReference type="ChEBI" id="CHEBI:30089"/>
        <dbReference type="ChEBI" id="CHEBI:78101"/>
        <dbReference type="ChEBI" id="CHEBI:78102"/>
    </reaction>
    <physiologicalReaction direction="left-to-right" evidence="2">
        <dbReference type="Rhea" id="RHEA:41369"/>
    </physiologicalReaction>
</comment>
<comment type="catalytic activity">
    <reaction evidence="2">
        <text>1-O-hexadecyl-2-acetyl-sn-glycero-3-phosphocholine + H2O = 1-O-hexadecyl-sn-glycero-3-phosphocholine + acetate + H(+)</text>
        <dbReference type="Rhea" id="RHEA:40479"/>
        <dbReference type="ChEBI" id="CHEBI:15377"/>
        <dbReference type="ChEBI" id="CHEBI:15378"/>
        <dbReference type="ChEBI" id="CHEBI:30089"/>
        <dbReference type="ChEBI" id="CHEBI:44811"/>
        <dbReference type="ChEBI" id="CHEBI:64496"/>
    </reaction>
    <physiologicalReaction direction="left-to-right" evidence="2">
        <dbReference type="Rhea" id="RHEA:40480"/>
    </physiologicalReaction>
</comment>
<comment type="catalytic activity">
    <reaction evidence="2">
        <text>1-O-octadecyl-2-acetyl-sn-glycero-3-phosphocholine + H2O = 1-O-octadecyl-sn-glycero-3-phosphocholine + acetate + H(+)</text>
        <dbReference type="Rhea" id="RHEA:41183"/>
        <dbReference type="ChEBI" id="CHEBI:15377"/>
        <dbReference type="ChEBI" id="CHEBI:15378"/>
        <dbReference type="ChEBI" id="CHEBI:30089"/>
        <dbReference type="ChEBI" id="CHEBI:52450"/>
        <dbReference type="ChEBI" id="CHEBI:75216"/>
    </reaction>
    <physiologicalReaction direction="left-to-right" evidence="2">
        <dbReference type="Rhea" id="RHEA:41184"/>
    </physiologicalReaction>
</comment>
<comment type="catalytic activity">
    <reaction evidence="2">
        <text>1-hexadecanoyl-2-acetyl-sn-glycero-3-phosphocholine + H2O = 1-hexadecanoyl-sn-glycero-3-phosphocholine + acetate + H(+)</text>
        <dbReference type="Rhea" id="RHEA:41203"/>
        <dbReference type="ChEBI" id="CHEBI:15377"/>
        <dbReference type="ChEBI" id="CHEBI:15378"/>
        <dbReference type="ChEBI" id="CHEBI:30089"/>
        <dbReference type="ChEBI" id="CHEBI:72998"/>
        <dbReference type="ChEBI" id="CHEBI:75219"/>
    </reaction>
    <physiologicalReaction direction="left-to-right" evidence="2">
        <dbReference type="Rhea" id="RHEA:41204"/>
    </physiologicalReaction>
</comment>
<comment type="catalytic activity">
    <reaction evidence="2">
        <text>1-hexadecanoyl-2-propionyl-sn-glycero-3-phosphocholine + H2O = propanoate + 1-hexadecanoyl-sn-glycero-3-phosphocholine + H(+)</text>
        <dbReference type="Rhea" id="RHEA:41191"/>
        <dbReference type="ChEBI" id="CHEBI:15377"/>
        <dbReference type="ChEBI" id="CHEBI:15378"/>
        <dbReference type="ChEBI" id="CHEBI:17272"/>
        <dbReference type="ChEBI" id="CHEBI:72998"/>
        <dbReference type="ChEBI" id="CHEBI:77831"/>
    </reaction>
    <physiologicalReaction direction="left-to-right" evidence="2">
        <dbReference type="Rhea" id="RHEA:41192"/>
    </physiologicalReaction>
</comment>
<comment type="catalytic activity">
    <reaction evidence="2">
        <text>1-hexadecanoyl-2-butanoyl-sn-glycero-3-phosphocholine + H2O = butanoate + 1-hexadecanoyl-sn-glycero-3-phosphocholine + H(+)</text>
        <dbReference type="Rhea" id="RHEA:41195"/>
        <dbReference type="ChEBI" id="CHEBI:15377"/>
        <dbReference type="ChEBI" id="CHEBI:15378"/>
        <dbReference type="ChEBI" id="CHEBI:17968"/>
        <dbReference type="ChEBI" id="CHEBI:72998"/>
        <dbReference type="ChEBI" id="CHEBI:77832"/>
    </reaction>
    <physiologicalReaction direction="left-to-right" evidence="2">
        <dbReference type="Rhea" id="RHEA:41196"/>
    </physiologicalReaction>
</comment>
<comment type="catalytic activity">
    <reaction evidence="2">
        <text>1-hexadecanoyl-2-pentanoyl-sn-glycero-3-phosphocholine + H2O = pentanoate + 1-hexadecanoyl-sn-glycero-3-phosphocholine + H(+)</text>
        <dbReference type="Rhea" id="RHEA:41199"/>
        <dbReference type="ChEBI" id="CHEBI:15377"/>
        <dbReference type="ChEBI" id="CHEBI:15378"/>
        <dbReference type="ChEBI" id="CHEBI:31011"/>
        <dbReference type="ChEBI" id="CHEBI:72998"/>
        <dbReference type="ChEBI" id="CHEBI:77833"/>
    </reaction>
    <physiologicalReaction direction="left-to-right" evidence="2">
        <dbReference type="Rhea" id="RHEA:41200"/>
    </physiologicalReaction>
</comment>
<comment type="catalytic activity">
    <reaction evidence="2">
        <text>1-hexadecanoyl-2-glutaroyl-sn-glycero-3-phosphocholine + H2O = glutarate + 1-hexadecanoyl-sn-glycero-3-phosphocholine + H(+)</text>
        <dbReference type="Rhea" id="RHEA:41159"/>
        <dbReference type="ChEBI" id="CHEBI:15377"/>
        <dbReference type="ChEBI" id="CHEBI:15378"/>
        <dbReference type="ChEBI" id="CHEBI:30921"/>
        <dbReference type="ChEBI" id="CHEBI:72998"/>
        <dbReference type="ChEBI" id="CHEBI:77756"/>
    </reaction>
    <physiologicalReaction direction="left-to-right" evidence="2">
        <dbReference type="Rhea" id="RHEA:41160"/>
    </physiologicalReaction>
</comment>
<comment type="catalytic activity">
    <reaction evidence="2">
        <text>1-hexadecanoyl-2-(5-oxopentanoyl)-sn-glycero-3-phosphocholine + H2O = 5-oxopentanoate + 1-hexadecanoyl-sn-glycero-3-phosphocholine + H(+)</text>
        <dbReference type="Rhea" id="RHEA:40483"/>
        <dbReference type="ChEBI" id="CHEBI:15377"/>
        <dbReference type="ChEBI" id="CHEBI:15378"/>
        <dbReference type="ChEBI" id="CHEBI:16120"/>
        <dbReference type="ChEBI" id="CHEBI:72998"/>
        <dbReference type="ChEBI" id="CHEBI:77890"/>
    </reaction>
    <physiologicalReaction direction="left-to-right" evidence="2">
        <dbReference type="Rhea" id="RHEA:40484"/>
    </physiologicalReaction>
</comment>
<comment type="catalytic activity">
    <reaction evidence="2">
        <text>1-hexadecanoyl-2-(9-oxononanoyl)-sn-glycero-3-phosphocholine + H2O = 9-oxononanoate + 1-hexadecanoyl-sn-glycero-3-phosphocholine + H(+)</text>
        <dbReference type="Rhea" id="RHEA:41179"/>
        <dbReference type="ChEBI" id="CHEBI:15377"/>
        <dbReference type="ChEBI" id="CHEBI:15378"/>
        <dbReference type="ChEBI" id="CHEBI:61042"/>
        <dbReference type="ChEBI" id="CHEBI:72998"/>
        <dbReference type="ChEBI" id="CHEBI:77812"/>
    </reaction>
    <physiologicalReaction direction="left-to-right" evidence="2">
        <dbReference type="Rhea" id="RHEA:41180"/>
    </physiologicalReaction>
</comment>
<comment type="catalytic activity">
    <reaction evidence="2">
        <text>1-hexadecanoyl-2-[9-hydroperoxy-(10E-octadecenoyl)]-sn-glycero-3-phosphocholine + H2O = 9-hydroperoxy-10E-octadecenoate + 1-hexadecanoyl-sn-glycero-3-phosphocholine + H(+)</text>
        <dbReference type="Rhea" id="RHEA:41151"/>
        <dbReference type="ChEBI" id="CHEBI:15377"/>
        <dbReference type="ChEBI" id="CHEBI:15378"/>
        <dbReference type="ChEBI" id="CHEBI:72998"/>
        <dbReference type="ChEBI" id="CHEBI:77753"/>
        <dbReference type="ChEBI" id="CHEBI:77754"/>
    </reaction>
    <physiologicalReaction direction="left-to-right" evidence="2">
        <dbReference type="Rhea" id="RHEA:41152"/>
    </physiologicalReaction>
</comment>
<comment type="catalytic activity">
    <reaction evidence="2">
        <text>1-hexadecanoyl-2-(10-hydroperoxy-8E-octadecenoyl)-sn-glycero-3-phosphocholine + H2O = 10-hydroperoxy-(8E)-octadecenoate + 1-hexadecanoyl-sn-glycero-3-phosphocholine + H(+)</text>
        <dbReference type="Rhea" id="RHEA:41155"/>
        <dbReference type="ChEBI" id="CHEBI:15377"/>
        <dbReference type="ChEBI" id="CHEBI:15378"/>
        <dbReference type="ChEBI" id="CHEBI:72998"/>
        <dbReference type="ChEBI" id="CHEBI:77749"/>
        <dbReference type="ChEBI" id="CHEBI:77755"/>
    </reaction>
    <physiologicalReaction direction="left-to-right" evidence="2">
        <dbReference type="Rhea" id="RHEA:41156"/>
    </physiologicalReaction>
</comment>
<comment type="subcellular location">
    <subcellularLocation>
        <location evidence="3">Secreted</location>
        <location evidence="3">Extracellular space</location>
    </subcellularLocation>
    <text evidence="3">Associates with HDL particles in plasma.</text>
</comment>
<comment type="tissue specificity">
    <text evidence="2">Plasma.</text>
</comment>
<comment type="PTM">
    <text evidence="2">N-glycosylated.</text>
</comment>
<comment type="similarity">
    <text evidence="6">Belongs to the AB hydrolase superfamily. Lipase family.</text>
</comment>
<feature type="signal peptide" evidence="1">
    <location>
        <begin position="1"/>
        <end position="21"/>
    </location>
</feature>
<feature type="chain" id="PRO_0000017832" description="Platelet-activating factor acetylhydrolase">
    <location>
        <begin position="22"/>
        <end position="436"/>
    </location>
</feature>
<feature type="active site" description="Nucleophile" evidence="1">
    <location>
        <position position="271"/>
    </location>
</feature>
<feature type="active site" description="Charge relay system" evidence="5">
    <location>
        <position position="294"/>
    </location>
</feature>
<feature type="active site" description="Charge relay system" evidence="5">
    <location>
        <position position="349"/>
    </location>
</feature>
<feature type="glycosylation site" description="N-linked (GlcNAc...) asparagine" evidence="4">
    <location>
        <position position="76"/>
    </location>
</feature>
<feature type="glycosylation site" description="N-linked (GlcNAc...) asparagine" evidence="4">
    <location>
        <position position="200"/>
    </location>
</feature>
<feature type="glycosylation site" description="N-linked (GlcNAc...) asparagine" evidence="4">
    <location>
        <position position="324"/>
    </location>
</feature>
<keyword id="KW-0325">Glycoprotein</keyword>
<keyword id="KW-0345">HDL</keyword>
<keyword id="KW-0378">Hydrolase</keyword>
<keyword id="KW-0442">Lipid degradation</keyword>
<keyword id="KW-0443">Lipid metabolism</keyword>
<keyword id="KW-0595">Phospholipid degradation</keyword>
<keyword id="KW-1208">Phospholipid metabolism</keyword>
<keyword id="KW-1185">Reference proteome</keyword>
<keyword id="KW-0964">Secreted</keyword>
<keyword id="KW-0732">Signal</keyword>
<sequence>MAPPKLHTLFCLSGFLALVHPFDWRDLDPVTYIQSSVWIQRIQSELLITSFGHTTIPKGNGPYSVGCTDLMSGYTNQSSFLRLYYPSQDNDFPDALWIPNEEYFQGLTETLGASSFLGKLLKLLYGSVKVPAKWNSPLKTGEKYPLIIFSHGLGAFRSIYSAIGIELASHGFIVAAVEHRDESAAATYYFQDAPAAESGNRSWIYYKVGNLETEERKRQLRQRGEECSQALSWLLSIDEGEPVKNVLDLNFDIQQLKGSLDRSKVAIIGHSFGGATVIQTLSEDQRFRCGIALDPWMFPVGEDVHSKIPQPLFFINSEYFQSANDTKKIEKFYQPQKERKMIAVKGSVHHNFVDFTFATGKIIGQMLSLKGKIDSEVAMDLINKASLAFLQKYLGLDKNFDQWNSLMEGDDENLIPEFTIPTTMQSSTGTEQRNPD</sequence>
<dbReference type="EC" id="3.1.1.47" evidence="2"/>
<dbReference type="EMBL" id="D67037">
    <property type="protein sequence ID" value="BAA11054.1"/>
    <property type="molecule type" value="mRNA"/>
</dbReference>
<dbReference type="PIR" id="JC5021">
    <property type="entry name" value="JC5021"/>
</dbReference>
<dbReference type="RefSeq" id="NP_001166357.1">
    <property type="nucleotide sequence ID" value="NM_001172886.1"/>
</dbReference>
<dbReference type="RefSeq" id="XP_005005344.1">
    <property type="nucleotide sequence ID" value="XM_005005287.2"/>
</dbReference>
<dbReference type="RefSeq" id="XP_013011984.1">
    <property type="nucleotide sequence ID" value="XM_013156530.1"/>
</dbReference>
<dbReference type="RefSeq" id="XP_013011985.1">
    <property type="nucleotide sequence ID" value="XM_013156531.1"/>
</dbReference>
<dbReference type="SMR" id="P70683"/>
<dbReference type="FunCoup" id="P70683">
    <property type="interactions" value="79"/>
</dbReference>
<dbReference type="STRING" id="10141.ENSCPOP00000024215"/>
<dbReference type="ESTHER" id="cavpo-pafa">
    <property type="family name" value="PAF-Acetylhydrolase"/>
</dbReference>
<dbReference type="GlyCosmos" id="P70683">
    <property type="glycosylation" value="3 sites, No reported glycans"/>
</dbReference>
<dbReference type="Ensembl" id="ENSCPOT00000044445.1">
    <property type="protein sequence ID" value="ENSCPOP00000024215.1"/>
    <property type="gene ID" value="ENSCPOG00000012786.4"/>
</dbReference>
<dbReference type="GeneID" id="100135600"/>
<dbReference type="KEGG" id="cpoc:100135600"/>
<dbReference type="CTD" id="7941"/>
<dbReference type="VEuPathDB" id="HostDB:ENSCPOG00000012786"/>
<dbReference type="eggNOG" id="KOG3847">
    <property type="taxonomic scope" value="Eukaryota"/>
</dbReference>
<dbReference type="GeneTree" id="ENSGT00390000005233"/>
<dbReference type="HOGENOM" id="CLU_022501_0_0_1"/>
<dbReference type="InParanoid" id="P70683"/>
<dbReference type="OMA" id="GSVHHNF"/>
<dbReference type="OrthoDB" id="2363873at2759"/>
<dbReference type="TreeFam" id="TF313831"/>
<dbReference type="Proteomes" id="UP000005447">
    <property type="component" value="Unassembled WGS sequence"/>
</dbReference>
<dbReference type="Bgee" id="ENSCPOG00000012786">
    <property type="expression patterns" value="Expressed in liver and 11 other cell types or tissues"/>
</dbReference>
<dbReference type="GO" id="GO:0034364">
    <property type="term" value="C:high-density lipoprotein particle"/>
    <property type="evidence" value="ECO:0000250"/>
    <property type="project" value="UniProtKB"/>
</dbReference>
<dbReference type="GO" id="GO:0034362">
    <property type="term" value="C:low-density lipoprotein particle"/>
    <property type="evidence" value="ECO:0000250"/>
    <property type="project" value="UniProtKB"/>
</dbReference>
<dbReference type="GO" id="GO:0003847">
    <property type="term" value="F:1-alkyl-2-acetylglycerophosphocholine esterase activity"/>
    <property type="evidence" value="ECO:0000250"/>
    <property type="project" value="UniProtKB"/>
</dbReference>
<dbReference type="GO" id="GO:0047499">
    <property type="term" value="F:calcium-independent phospholipase A2 activity"/>
    <property type="evidence" value="ECO:0000250"/>
    <property type="project" value="UniProtKB"/>
</dbReference>
<dbReference type="GO" id="GO:0005543">
    <property type="term" value="F:phospholipid binding"/>
    <property type="evidence" value="ECO:0007669"/>
    <property type="project" value="Ensembl"/>
</dbReference>
<dbReference type="GO" id="GO:0034440">
    <property type="term" value="P:lipid oxidation"/>
    <property type="evidence" value="ECO:0007669"/>
    <property type="project" value="Ensembl"/>
</dbReference>
<dbReference type="GO" id="GO:0034374">
    <property type="term" value="P:low-density lipoprotein particle remodeling"/>
    <property type="evidence" value="ECO:0007669"/>
    <property type="project" value="Ensembl"/>
</dbReference>
<dbReference type="GO" id="GO:0034638">
    <property type="term" value="P:phosphatidylcholine catabolic process"/>
    <property type="evidence" value="ECO:0000250"/>
    <property type="project" value="UniProtKB"/>
</dbReference>
<dbReference type="GO" id="GO:0034441">
    <property type="term" value="P:plasma lipoprotein particle oxidation"/>
    <property type="evidence" value="ECO:0007669"/>
    <property type="project" value="Ensembl"/>
</dbReference>
<dbReference type="GO" id="GO:0062234">
    <property type="term" value="P:platelet activating factor catabolic process"/>
    <property type="evidence" value="ECO:0000250"/>
    <property type="project" value="UniProtKB"/>
</dbReference>
<dbReference type="GO" id="GO:0046469">
    <property type="term" value="P:platelet activating factor metabolic process"/>
    <property type="evidence" value="ECO:0000250"/>
    <property type="project" value="UniProtKB"/>
</dbReference>
<dbReference type="GO" id="GO:0090026">
    <property type="term" value="P:positive regulation of monocyte chemotaxis"/>
    <property type="evidence" value="ECO:0007669"/>
    <property type="project" value="Ensembl"/>
</dbReference>
<dbReference type="FunFam" id="3.40.50.1820:FF:000062">
    <property type="entry name" value="Platelet-activating factor acetylhydrolase"/>
    <property type="match status" value="1"/>
</dbReference>
<dbReference type="Gene3D" id="3.40.50.1820">
    <property type="entry name" value="alpha/beta hydrolase"/>
    <property type="match status" value="1"/>
</dbReference>
<dbReference type="InterPro" id="IPR029058">
    <property type="entry name" value="AB_hydrolase_fold"/>
</dbReference>
<dbReference type="InterPro" id="IPR016715">
    <property type="entry name" value="PAF_acetylhydro_eukaryote"/>
</dbReference>
<dbReference type="PANTHER" id="PTHR10272">
    <property type="entry name" value="PLATELET-ACTIVATING FACTOR ACETYLHYDROLASE"/>
    <property type="match status" value="1"/>
</dbReference>
<dbReference type="PANTHER" id="PTHR10272:SF12">
    <property type="entry name" value="PLATELET-ACTIVATING FACTOR ACETYLHYDROLASE"/>
    <property type="match status" value="1"/>
</dbReference>
<dbReference type="Pfam" id="PF03403">
    <property type="entry name" value="PAF-AH_p_II"/>
    <property type="match status" value="1"/>
</dbReference>
<dbReference type="PIRSF" id="PIRSF018169">
    <property type="entry name" value="PAF_acetylhydrolase"/>
    <property type="match status" value="1"/>
</dbReference>
<dbReference type="SUPFAM" id="SSF53474">
    <property type="entry name" value="alpha/beta-Hydrolases"/>
    <property type="match status" value="1"/>
</dbReference>
<dbReference type="PROSITE" id="PS00120">
    <property type="entry name" value="LIPASE_SER"/>
    <property type="match status" value="1"/>
</dbReference>
<accession>P70683</accession>